<protein>
    <recommendedName>
        <fullName evidence="1">NAD kinase</fullName>
        <ecNumber evidence="1">2.7.1.23</ecNumber>
    </recommendedName>
    <alternativeName>
        <fullName evidence="1">ATP-dependent NAD kinase</fullName>
    </alternativeName>
</protein>
<reference key="1">
    <citation type="journal article" date="2014" name="Stand. Genomic Sci.">
        <title>Complete genome sequence of Burkholderia phymatum STM815(T), a broad host range and efficient nitrogen-fixing symbiont of Mimosa species.</title>
        <authorList>
            <person name="Moulin L."/>
            <person name="Klonowska A."/>
            <person name="Caroline B."/>
            <person name="Booth K."/>
            <person name="Vriezen J.A."/>
            <person name="Melkonian R."/>
            <person name="James E.K."/>
            <person name="Young J.P."/>
            <person name="Bena G."/>
            <person name="Hauser L."/>
            <person name="Land M."/>
            <person name="Kyrpides N."/>
            <person name="Bruce D."/>
            <person name="Chain P."/>
            <person name="Copeland A."/>
            <person name="Pitluck S."/>
            <person name="Woyke T."/>
            <person name="Lizotte-Waniewski M."/>
            <person name="Bristow J."/>
            <person name="Riley M."/>
        </authorList>
    </citation>
    <scope>NUCLEOTIDE SEQUENCE [LARGE SCALE GENOMIC DNA]</scope>
    <source>
        <strain>DSM 17167 / CIP 108236 / LMG 21445 / STM815</strain>
    </source>
</reference>
<name>NADK_PARP8</name>
<comment type="function">
    <text evidence="1">Involved in the regulation of the intracellular balance of NAD and NADP, and is a key enzyme in the biosynthesis of NADP. Catalyzes specifically the phosphorylation on 2'-hydroxyl of the adenosine moiety of NAD to yield NADP.</text>
</comment>
<comment type="catalytic activity">
    <reaction evidence="1">
        <text>NAD(+) + ATP = ADP + NADP(+) + H(+)</text>
        <dbReference type="Rhea" id="RHEA:18629"/>
        <dbReference type="ChEBI" id="CHEBI:15378"/>
        <dbReference type="ChEBI" id="CHEBI:30616"/>
        <dbReference type="ChEBI" id="CHEBI:57540"/>
        <dbReference type="ChEBI" id="CHEBI:58349"/>
        <dbReference type="ChEBI" id="CHEBI:456216"/>
        <dbReference type="EC" id="2.7.1.23"/>
    </reaction>
</comment>
<comment type="cofactor">
    <cofactor evidence="1">
        <name>a divalent metal cation</name>
        <dbReference type="ChEBI" id="CHEBI:60240"/>
    </cofactor>
</comment>
<comment type="subcellular location">
    <subcellularLocation>
        <location evidence="1">Cytoplasm</location>
    </subcellularLocation>
</comment>
<comment type="similarity">
    <text evidence="1">Belongs to the NAD kinase family.</text>
</comment>
<gene>
    <name evidence="1" type="primary">nadK</name>
    <name type="ordered locus">Bphy_2504</name>
</gene>
<feature type="chain" id="PRO_1000120836" description="NAD kinase">
    <location>
        <begin position="1"/>
        <end position="300"/>
    </location>
</feature>
<feature type="active site" description="Proton acceptor" evidence="1">
    <location>
        <position position="75"/>
    </location>
</feature>
<feature type="binding site" evidence="1">
    <location>
        <begin position="75"/>
        <end position="76"/>
    </location>
    <ligand>
        <name>NAD(+)</name>
        <dbReference type="ChEBI" id="CHEBI:57540"/>
    </ligand>
</feature>
<feature type="binding site" evidence="1">
    <location>
        <begin position="149"/>
        <end position="150"/>
    </location>
    <ligand>
        <name>NAD(+)</name>
        <dbReference type="ChEBI" id="CHEBI:57540"/>
    </ligand>
</feature>
<feature type="binding site" evidence="1">
    <location>
        <position position="177"/>
    </location>
    <ligand>
        <name>NAD(+)</name>
        <dbReference type="ChEBI" id="CHEBI:57540"/>
    </ligand>
</feature>
<feature type="binding site" evidence="1">
    <location>
        <position position="179"/>
    </location>
    <ligand>
        <name>NAD(+)</name>
        <dbReference type="ChEBI" id="CHEBI:57540"/>
    </ligand>
</feature>
<feature type="binding site" evidence="1">
    <location>
        <begin position="190"/>
        <end position="195"/>
    </location>
    <ligand>
        <name>NAD(+)</name>
        <dbReference type="ChEBI" id="CHEBI:57540"/>
    </ligand>
</feature>
<feature type="binding site" evidence="1">
    <location>
        <position position="214"/>
    </location>
    <ligand>
        <name>NAD(+)</name>
        <dbReference type="ChEBI" id="CHEBI:57540"/>
    </ligand>
</feature>
<feature type="binding site" evidence="1">
    <location>
        <position position="248"/>
    </location>
    <ligand>
        <name>NAD(+)</name>
        <dbReference type="ChEBI" id="CHEBI:57540"/>
    </ligand>
</feature>
<accession>B2JGE9</accession>
<sequence length="300" mass="32939">MQANSQFKTVALVGRSNTPGIGEPLTALATCIEKLGFEIAFEAETAQEIGVSRWPALQPAEIGARADVAIVLGGDGTMLGIGRQLAPYKTPLIGINHGRLGFITDIPFSDMREIIPQMLSGSFEREERSLLESRIMRDGQPIYHALAFNDVVVNRSGFSGMAELRVSVDGRFMYNQRSDGLIVATPTGSTAYALSSQGPILHPQLQGLVLVPIAPHALSNRPIVIPDDSKVSIQIISGRDVNVNFDMQSFTALELNDTIDVRRSRHTVPFLHPVGYSYYATLRKKLHWNEYPSHEDDPDD</sequence>
<keyword id="KW-0067">ATP-binding</keyword>
<keyword id="KW-0963">Cytoplasm</keyword>
<keyword id="KW-0418">Kinase</keyword>
<keyword id="KW-0520">NAD</keyword>
<keyword id="KW-0521">NADP</keyword>
<keyword id="KW-0547">Nucleotide-binding</keyword>
<keyword id="KW-1185">Reference proteome</keyword>
<keyword id="KW-0808">Transferase</keyword>
<evidence type="ECO:0000255" key="1">
    <source>
        <dbReference type="HAMAP-Rule" id="MF_00361"/>
    </source>
</evidence>
<dbReference type="EC" id="2.7.1.23" evidence="1"/>
<dbReference type="EMBL" id="CP001043">
    <property type="protein sequence ID" value="ACC71677.1"/>
    <property type="molecule type" value="Genomic_DNA"/>
</dbReference>
<dbReference type="RefSeq" id="WP_012401881.1">
    <property type="nucleotide sequence ID" value="NC_010622.1"/>
</dbReference>
<dbReference type="SMR" id="B2JGE9"/>
<dbReference type="STRING" id="391038.Bphy_2504"/>
<dbReference type="KEGG" id="bph:Bphy_2504"/>
<dbReference type="eggNOG" id="COG0061">
    <property type="taxonomic scope" value="Bacteria"/>
</dbReference>
<dbReference type="HOGENOM" id="CLU_008831_0_1_4"/>
<dbReference type="OrthoDB" id="9774737at2"/>
<dbReference type="Proteomes" id="UP000001192">
    <property type="component" value="Chromosome 1"/>
</dbReference>
<dbReference type="GO" id="GO:0005737">
    <property type="term" value="C:cytoplasm"/>
    <property type="evidence" value="ECO:0007669"/>
    <property type="project" value="UniProtKB-SubCell"/>
</dbReference>
<dbReference type="GO" id="GO:0005524">
    <property type="term" value="F:ATP binding"/>
    <property type="evidence" value="ECO:0007669"/>
    <property type="project" value="UniProtKB-KW"/>
</dbReference>
<dbReference type="GO" id="GO:0046872">
    <property type="term" value="F:metal ion binding"/>
    <property type="evidence" value="ECO:0007669"/>
    <property type="project" value="UniProtKB-UniRule"/>
</dbReference>
<dbReference type="GO" id="GO:0051287">
    <property type="term" value="F:NAD binding"/>
    <property type="evidence" value="ECO:0007669"/>
    <property type="project" value="UniProtKB-ARBA"/>
</dbReference>
<dbReference type="GO" id="GO:0003951">
    <property type="term" value="F:NAD+ kinase activity"/>
    <property type="evidence" value="ECO:0007669"/>
    <property type="project" value="UniProtKB-UniRule"/>
</dbReference>
<dbReference type="GO" id="GO:0019674">
    <property type="term" value="P:NAD metabolic process"/>
    <property type="evidence" value="ECO:0007669"/>
    <property type="project" value="InterPro"/>
</dbReference>
<dbReference type="GO" id="GO:0006741">
    <property type="term" value="P:NADP biosynthetic process"/>
    <property type="evidence" value="ECO:0007669"/>
    <property type="project" value="UniProtKB-UniRule"/>
</dbReference>
<dbReference type="Gene3D" id="3.40.50.10330">
    <property type="entry name" value="Probable inorganic polyphosphate/atp-NAD kinase, domain 1"/>
    <property type="match status" value="1"/>
</dbReference>
<dbReference type="Gene3D" id="2.60.200.30">
    <property type="entry name" value="Probable inorganic polyphosphate/atp-NAD kinase, domain 2"/>
    <property type="match status" value="1"/>
</dbReference>
<dbReference type="HAMAP" id="MF_00361">
    <property type="entry name" value="NAD_kinase"/>
    <property type="match status" value="1"/>
</dbReference>
<dbReference type="InterPro" id="IPR017438">
    <property type="entry name" value="ATP-NAD_kinase_N"/>
</dbReference>
<dbReference type="InterPro" id="IPR017437">
    <property type="entry name" value="ATP-NAD_kinase_PpnK-typ_C"/>
</dbReference>
<dbReference type="InterPro" id="IPR016064">
    <property type="entry name" value="NAD/diacylglycerol_kinase_sf"/>
</dbReference>
<dbReference type="InterPro" id="IPR002504">
    <property type="entry name" value="NADK"/>
</dbReference>
<dbReference type="NCBIfam" id="NF002561">
    <property type="entry name" value="PRK02155.1"/>
    <property type="match status" value="1"/>
</dbReference>
<dbReference type="PANTHER" id="PTHR20275">
    <property type="entry name" value="NAD KINASE"/>
    <property type="match status" value="1"/>
</dbReference>
<dbReference type="PANTHER" id="PTHR20275:SF0">
    <property type="entry name" value="NAD KINASE"/>
    <property type="match status" value="1"/>
</dbReference>
<dbReference type="Pfam" id="PF01513">
    <property type="entry name" value="NAD_kinase"/>
    <property type="match status" value="1"/>
</dbReference>
<dbReference type="Pfam" id="PF20143">
    <property type="entry name" value="NAD_kinase_C"/>
    <property type="match status" value="1"/>
</dbReference>
<dbReference type="SUPFAM" id="SSF111331">
    <property type="entry name" value="NAD kinase/diacylglycerol kinase-like"/>
    <property type="match status" value="1"/>
</dbReference>
<organism>
    <name type="scientific">Paraburkholderia phymatum (strain DSM 17167 / CIP 108236 / LMG 21445 / STM815)</name>
    <name type="common">Burkholderia phymatum</name>
    <dbReference type="NCBI Taxonomy" id="391038"/>
    <lineage>
        <taxon>Bacteria</taxon>
        <taxon>Pseudomonadati</taxon>
        <taxon>Pseudomonadota</taxon>
        <taxon>Betaproteobacteria</taxon>
        <taxon>Burkholderiales</taxon>
        <taxon>Burkholderiaceae</taxon>
        <taxon>Paraburkholderia</taxon>
    </lineage>
</organism>
<proteinExistence type="inferred from homology"/>